<sequence>MMIKNKKKLLFLCLLVILIATAYISFVTGTIKLSFNDLFTKFTTGSNEAVDSIIDLRLPRILIALMVGAMLAVSGALLQAALQNPLAEANIIGVSSGALIMRALCMLFIPQLYFYLPLLSFIGGLIPFLIIIVLHSKFRFNAVSMILVGVALFVLLNGVLEILTQNPLMKIPQGLTMKIWSDVYILAVSALLGLILTLLLSLKLNLLNLDDVQARSIGFNIDRYRWLTGLLAVFLASATVAIVGQLAFLGIIVPHVVRKLVGGNYRVLIPFSTVIGAWLLLVADLLGRVIQPPLEIPANAILMIVGGPMLIYLICQSQRNRI</sequence>
<accession>Q2YX91</accession>
<keyword id="KW-1003">Cell membrane</keyword>
<keyword id="KW-0408">Iron</keyword>
<keyword id="KW-0472">Membrane</keyword>
<keyword id="KW-0812">Transmembrane</keyword>
<keyword id="KW-1133">Transmembrane helix</keyword>
<keyword id="KW-0813">Transport</keyword>
<gene>
    <name type="primary">isdF</name>
    <name type="synonym">sirG</name>
    <name type="ordered locus">SAB0998</name>
</gene>
<proteinExistence type="inferred from homology"/>
<protein>
    <recommendedName>
        <fullName>Probable heme-iron transport system permease protein IsdF</fullName>
    </recommendedName>
    <alternativeName>
        <fullName>Iron-regulated surface determinant protein F</fullName>
    </alternativeName>
    <alternativeName>
        <fullName>Staphylococcal iron-regulated protein G</fullName>
    </alternativeName>
</protein>
<organism>
    <name type="scientific">Staphylococcus aureus (strain bovine RF122 / ET3-1)</name>
    <dbReference type="NCBI Taxonomy" id="273036"/>
    <lineage>
        <taxon>Bacteria</taxon>
        <taxon>Bacillati</taxon>
        <taxon>Bacillota</taxon>
        <taxon>Bacilli</taxon>
        <taxon>Bacillales</taxon>
        <taxon>Staphylococcaceae</taxon>
        <taxon>Staphylococcus</taxon>
    </lineage>
</organism>
<reference key="1">
    <citation type="journal article" date="2007" name="PLoS ONE">
        <title>Molecular correlates of host specialization in Staphylococcus aureus.</title>
        <authorList>
            <person name="Herron-Olson L."/>
            <person name="Fitzgerald J.R."/>
            <person name="Musser J.M."/>
            <person name="Kapur V."/>
        </authorList>
    </citation>
    <scope>NUCLEOTIDE SEQUENCE [LARGE SCALE GENOMIC DNA]</scope>
    <source>
        <strain>bovine RF122 / ET3-1</strain>
    </source>
</reference>
<dbReference type="EMBL" id="AJ938182">
    <property type="protein sequence ID" value="CAI80686.1"/>
    <property type="molecule type" value="Genomic_DNA"/>
</dbReference>
<dbReference type="SMR" id="Q2YX91"/>
<dbReference type="KEGG" id="sab:SAB0998"/>
<dbReference type="HOGENOM" id="CLU_013016_1_1_9"/>
<dbReference type="GO" id="GO:0005886">
    <property type="term" value="C:plasma membrane"/>
    <property type="evidence" value="ECO:0007669"/>
    <property type="project" value="UniProtKB-SubCell"/>
</dbReference>
<dbReference type="GO" id="GO:0022857">
    <property type="term" value="F:transmembrane transporter activity"/>
    <property type="evidence" value="ECO:0007669"/>
    <property type="project" value="InterPro"/>
</dbReference>
<dbReference type="GO" id="GO:0033214">
    <property type="term" value="P:siderophore-dependent iron import into cell"/>
    <property type="evidence" value="ECO:0007669"/>
    <property type="project" value="TreeGrafter"/>
</dbReference>
<dbReference type="CDD" id="cd06550">
    <property type="entry name" value="TM_ABC_iron-siderophores_like"/>
    <property type="match status" value="1"/>
</dbReference>
<dbReference type="FunFam" id="1.10.3470.10:FF:000001">
    <property type="entry name" value="Vitamin B12 ABC transporter permease BtuC"/>
    <property type="match status" value="1"/>
</dbReference>
<dbReference type="Gene3D" id="1.10.3470.10">
    <property type="entry name" value="ABC transporter involved in vitamin B12 uptake, BtuC"/>
    <property type="match status" value="1"/>
</dbReference>
<dbReference type="InterPro" id="IPR037294">
    <property type="entry name" value="ABC_BtuC-like"/>
</dbReference>
<dbReference type="InterPro" id="IPR000522">
    <property type="entry name" value="ABC_transptr_permease_BtuC"/>
</dbReference>
<dbReference type="PANTHER" id="PTHR30472">
    <property type="entry name" value="FERRIC ENTEROBACTIN TRANSPORT SYSTEM PERMEASE PROTEIN"/>
    <property type="match status" value="1"/>
</dbReference>
<dbReference type="PANTHER" id="PTHR30472:SF21">
    <property type="entry name" value="HEME-IRON TRANSPORT SYSTEM PERMEASE PROTEIN ISDF-RELATED"/>
    <property type="match status" value="1"/>
</dbReference>
<dbReference type="Pfam" id="PF01032">
    <property type="entry name" value="FecCD"/>
    <property type="match status" value="1"/>
</dbReference>
<dbReference type="SUPFAM" id="SSF81345">
    <property type="entry name" value="ABC transporter involved in vitamin B12 uptake, BtuC"/>
    <property type="match status" value="1"/>
</dbReference>
<feature type="chain" id="PRO_0000372461" description="Probable heme-iron transport system permease protein IsdF">
    <location>
        <begin position="1"/>
        <end position="322"/>
    </location>
</feature>
<feature type="transmembrane region" description="Helical" evidence="2">
    <location>
        <begin position="9"/>
        <end position="29"/>
    </location>
</feature>
<feature type="transmembrane region" description="Helical" evidence="2">
    <location>
        <begin position="61"/>
        <end position="81"/>
    </location>
</feature>
<feature type="transmembrane region" description="Helical" evidence="2">
    <location>
        <begin position="89"/>
        <end position="109"/>
    </location>
</feature>
<feature type="transmembrane region" description="Helical" evidence="2">
    <location>
        <begin position="114"/>
        <end position="134"/>
    </location>
</feature>
<feature type="transmembrane region" description="Helical" evidence="2">
    <location>
        <begin position="143"/>
        <end position="163"/>
    </location>
</feature>
<feature type="transmembrane region" description="Helical" evidence="2">
    <location>
        <begin position="179"/>
        <end position="199"/>
    </location>
</feature>
<feature type="transmembrane region" description="Helical" evidence="2">
    <location>
        <begin position="233"/>
        <end position="253"/>
    </location>
</feature>
<feature type="transmembrane region" description="Helical" evidence="2">
    <location>
        <begin position="267"/>
        <end position="287"/>
    </location>
</feature>
<feature type="transmembrane region" description="Helical" evidence="2">
    <location>
        <begin position="294"/>
        <end position="314"/>
    </location>
</feature>
<evidence type="ECO:0000250" key="1"/>
<evidence type="ECO:0000255" key="2"/>
<evidence type="ECO:0000305" key="3"/>
<comment type="function">
    <text evidence="1">Part of the binding-protein-dependent transport system for heme-iron. Responsible for the translocation of the substrate across the membrane (By similarity).</text>
</comment>
<comment type="subcellular location">
    <subcellularLocation>
        <location evidence="3">Cell membrane</location>
        <topology evidence="3">Multi-pass membrane protein</topology>
    </subcellularLocation>
</comment>
<comment type="induction">
    <text evidence="1">Repressed by fur in the presence of iron.</text>
</comment>
<comment type="similarity">
    <text evidence="3">Belongs to the binding-protein-dependent transport system permease family. FecCD subfamily.</text>
</comment>
<name>ISDF_STAAB</name>